<reference evidence="3" key="1">
    <citation type="submission" date="2003-01" db="EMBL/GenBank/DDBJ databases">
        <title>The full-length cDNA of R-phycoerythrin from Corallina officinalis.</title>
        <authorList>
            <person name="Wang S."/>
            <person name="Zhong F.-D."/>
            <person name="Wu Z.-J."/>
            <person name="Lin Q.-Y."/>
            <person name="Xie L.-H."/>
        </authorList>
    </citation>
    <scope>NUCLEOTIDE SEQUENCE [MRNA]</scope>
</reference>
<reference evidence="3" key="2">
    <citation type="submission" date="2003-05" db="UniProtKB">
        <authorList>
            <person name="Wang S."/>
            <person name="Zhong F.-D."/>
            <person name="Wu Z.-J."/>
        </authorList>
    </citation>
    <scope>PROTEIN SEQUENCE OF 72-91</scope>
</reference>
<accession>P83592</accession>
<name>PHEG_COROI</name>
<dbReference type="EMBL" id="AY209894">
    <property type="protein sequence ID" value="AAO50083.1"/>
    <property type="molecule type" value="mRNA"/>
</dbReference>
<dbReference type="SMR" id="P83592"/>
<dbReference type="GO" id="GO:0009535">
    <property type="term" value="C:chloroplast thylakoid membrane"/>
    <property type="evidence" value="ECO:0007669"/>
    <property type="project" value="UniProtKB-SubCell"/>
</dbReference>
<dbReference type="GO" id="GO:0030089">
    <property type="term" value="C:phycobilisome"/>
    <property type="evidence" value="ECO:0007669"/>
    <property type="project" value="UniProtKB-KW"/>
</dbReference>
<dbReference type="GO" id="GO:0015979">
    <property type="term" value="P:photosynthesis"/>
    <property type="evidence" value="ECO:0007669"/>
    <property type="project" value="UniProtKB-KW"/>
</dbReference>
<feature type="transit peptide" description="Chloroplast" evidence="2">
    <location>
        <begin position="1"/>
        <end position="71"/>
    </location>
</feature>
<feature type="chain" id="PRO_0000002830" description="R-phycoerythrin gamma chain, chloroplastic">
    <location>
        <begin position="72"/>
        <end position="319"/>
    </location>
</feature>
<feature type="binding site" description="covalent" evidence="1">
    <location>
        <position position="96"/>
    </location>
    <ligand>
        <name>phycourobilin</name>
        <dbReference type="ChEBI" id="CHEBI:189062"/>
        <label>1</label>
    </ligand>
</feature>
<feature type="binding site" description="covalent" evidence="1">
    <location>
        <position position="135"/>
    </location>
    <ligand>
        <name>phycourobilin</name>
        <dbReference type="ChEBI" id="CHEBI:189062"/>
        <label>2</label>
    </ligand>
</feature>
<feature type="binding site" description="covalent" evidence="1">
    <location>
        <position position="212"/>
    </location>
    <ligand>
        <name>(2R,3E)-phycoerythrobilin</name>
        <dbReference type="ChEBI" id="CHEBI:85276"/>
    </ligand>
</feature>
<feature type="binding site" description="covalent" evidence="1">
    <location>
        <position position="299"/>
    </location>
    <ligand>
        <name>phycourobilin</name>
        <dbReference type="ChEBI" id="CHEBI:189062"/>
        <label>3</label>
    </ligand>
</feature>
<protein>
    <recommendedName>
        <fullName>R-phycoerythrin gamma chain, chloroplastic</fullName>
    </recommendedName>
</protein>
<sequence>MDSPAFAVTGMFAAAKVGVTSFTGATEPVSTRRRTSGNVTMAVDAFQKKFQTFGKIGVDYSRPKKLASYKRGGFDAASVEYPNAPSFAGKYSIAPCGQPSGASKILMKYDEYCAKGVLQVFKRNAVPFGVYTTKCTEGTVAGQAQEKRVFNRTMAFRQAQKPVNVRLAEQYEARRKCFILANGCSREEDQFKSMPVSAATFLAGKHESLGTCFRVVTPSNIAEDYIASGVRMQLVAKSNSTGVYGVGSCMEGFAKGDAEARRVAALAAEYRALQQSPAAVTGRQYESSRMAVKLYAQNCSHEQEQLYKWPATAAAFCRY</sequence>
<organism evidence="4">
    <name type="scientific">Corallina officinalis</name>
    <name type="common">Coral seaweed</name>
    <dbReference type="NCBI Taxonomy" id="35170"/>
    <lineage>
        <taxon>Eukaryota</taxon>
        <taxon>Rhodophyta</taxon>
        <taxon>Florideophyceae</taxon>
        <taxon>Corallinophycidae</taxon>
        <taxon>Corallinales</taxon>
        <taxon>Corallinaceae</taxon>
        <taxon>Corallinoideae</taxon>
        <taxon>Corallina</taxon>
    </lineage>
</organism>
<proteinExistence type="evidence at protein level"/>
<comment type="subunit">
    <text evidence="3">Heteromer of 4 alpha, 4 beta and one gamma chains.</text>
</comment>
<comment type="subcellular location">
    <subcellularLocation>
        <location evidence="1">Plastid</location>
        <location evidence="1">Chloroplast thylakoid membrane</location>
        <topology evidence="1">Peripheral membrane protein</topology>
        <orientation evidence="1">Stromal side</orientation>
    </subcellularLocation>
    <text evidence="1">Forms the periphery of the phycobilisome rod.</text>
</comment>
<comment type="PTM">
    <text>Contains four covalently linked bilin chromophores.</text>
</comment>
<keyword id="KW-0042">Antenna complex</keyword>
<keyword id="KW-0089">Bile pigment</keyword>
<keyword id="KW-0150">Chloroplast</keyword>
<keyword id="KW-0157">Chromophore</keyword>
<keyword id="KW-0903">Direct protein sequencing</keyword>
<keyword id="KW-0249">Electron transport</keyword>
<keyword id="KW-0472">Membrane</keyword>
<keyword id="KW-0602">Photosynthesis</keyword>
<keyword id="KW-0605">Phycobilisome</keyword>
<keyword id="KW-0934">Plastid</keyword>
<keyword id="KW-0793">Thylakoid</keyword>
<keyword id="KW-0809">Transit peptide</keyword>
<keyword id="KW-0813">Transport</keyword>
<evidence type="ECO:0000250" key="1"/>
<evidence type="ECO:0000269" key="2">
    <source ref="2"/>
</evidence>
<evidence type="ECO:0000305" key="3"/>
<evidence type="ECO:0000312" key="4">
    <source>
        <dbReference type="EMBL" id="AAO50083.1"/>
    </source>
</evidence>